<gene>
    <name evidence="1" type="primary">hisG</name>
    <name type="ordered locus">ETA_13560</name>
</gene>
<comment type="function">
    <text evidence="1">Catalyzes the condensation of ATP and 5-phosphoribose 1-diphosphate to form N'-(5'-phosphoribosyl)-ATP (PR-ATP). Has a crucial role in the pathway because the rate of histidine biosynthesis seems to be controlled primarily by regulation of HisG enzymatic activity.</text>
</comment>
<comment type="catalytic activity">
    <reaction evidence="1">
        <text>1-(5-phospho-beta-D-ribosyl)-ATP + diphosphate = 5-phospho-alpha-D-ribose 1-diphosphate + ATP</text>
        <dbReference type="Rhea" id="RHEA:18473"/>
        <dbReference type="ChEBI" id="CHEBI:30616"/>
        <dbReference type="ChEBI" id="CHEBI:33019"/>
        <dbReference type="ChEBI" id="CHEBI:58017"/>
        <dbReference type="ChEBI" id="CHEBI:73183"/>
        <dbReference type="EC" id="2.4.2.17"/>
    </reaction>
</comment>
<comment type="cofactor">
    <cofactor evidence="1">
        <name>Mg(2+)</name>
        <dbReference type="ChEBI" id="CHEBI:18420"/>
    </cofactor>
</comment>
<comment type="activity regulation">
    <text evidence="1">Feedback inhibited by histidine.</text>
</comment>
<comment type="pathway">
    <text evidence="1">Amino-acid biosynthesis; L-histidine biosynthesis; L-histidine from 5-phospho-alpha-D-ribose 1-diphosphate: step 1/9.</text>
</comment>
<comment type="subunit">
    <text evidence="1">Equilibrium between an active dimeric form, an inactive hexameric form and higher aggregates. Interconversion between the various forms is largely reversible and is influenced by the natural substrates and inhibitors of the enzyme.</text>
</comment>
<comment type="subcellular location">
    <subcellularLocation>
        <location evidence="1">Cytoplasm</location>
    </subcellularLocation>
</comment>
<comment type="similarity">
    <text evidence="1">Belongs to the ATP phosphoribosyltransferase family. Long subfamily.</text>
</comment>
<dbReference type="EC" id="2.4.2.17" evidence="1"/>
<dbReference type="EMBL" id="CU468135">
    <property type="protein sequence ID" value="CAO96402.1"/>
    <property type="molecule type" value="Genomic_DNA"/>
</dbReference>
<dbReference type="RefSeq" id="WP_012441096.1">
    <property type="nucleotide sequence ID" value="NC_010694.1"/>
</dbReference>
<dbReference type="SMR" id="B2VFL7"/>
<dbReference type="STRING" id="465817.ETA_13560"/>
<dbReference type="KEGG" id="eta:ETA_13560"/>
<dbReference type="eggNOG" id="COG0040">
    <property type="taxonomic scope" value="Bacteria"/>
</dbReference>
<dbReference type="HOGENOM" id="CLU_038115_1_0_6"/>
<dbReference type="OrthoDB" id="9801867at2"/>
<dbReference type="UniPathway" id="UPA00031">
    <property type="reaction ID" value="UER00006"/>
</dbReference>
<dbReference type="Proteomes" id="UP000001726">
    <property type="component" value="Chromosome"/>
</dbReference>
<dbReference type="GO" id="GO:0005737">
    <property type="term" value="C:cytoplasm"/>
    <property type="evidence" value="ECO:0007669"/>
    <property type="project" value="UniProtKB-SubCell"/>
</dbReference>
<dbReference type="GO" id="GO:0005524">
    <property type="term" value="F:ATP binding"/>
    <property type="evidence" value="ECO:0007669"/>
    <property type="project" value="UniProtKB-KW"/>
</dbReference>
<dbReference type="GO" id="GO:0003879">
    <property type="term" value="F:ATP phosphoribosyltransferase activity"/>
    <property type="evidence" value="ECO:0007669"/>
    <property type="project" value="UniProtKB-UniRule"/>
</dbReference>
<dbReference type="GO" id="GO:0000287">
    <property type="term" value="F:magnesium ion binding"/>
    <property type="evidence" value="ECO:0007669"/>
    <property type="project" value="UniProtKB-UniRule"/>
</dbReference>
<dbReference type="GO" id="GO:0000105">
    <property type="term" value="P:L-histidine biosynthetic process"/>
    <property type="evidence" value="ECO:0007669"/>
    <property type="project" value="UniProtKB-UniRule"/>
</dbReference>
<dbReference type="CDD" id="cd13592">
    <property type="entry name" value="PBP2_HisGL2"/>
    <property type="match status" value="1"/>
</dbReference>
<dbReference type="FunFam" id="3.30.70.120:FF:000002">
    <property type="entry name" value="ATP phosphoribosyltransferase"/>
    <property type="match status" value="1"/>
</dbReference>
<dbReference type="FunFam" id="3.40.190.10:FF:000008">
    <property type="entry name" value="ATP phosphoribosyltransferase"/>
    <property type="match status" value="1"/>
</dbReference>
<dbReference type="Gene3D" id="3.30.70.120">
    <property type="match status" value="1"/>
</dbReference>
<dbReference type="Gene3D" id="3.40.190.10">
    <property type="entry name" value="Periplasmic binding protein-like II"/>
    <property type="match status" value="2"/>
</dbReference>
<dbReference type="HAMAP" id="MF_00079">
    <property type="entry name" value="HisG_Long"/>
    <property type="match status" value="1"/>
</dbReference>
<dbReference type="InterPro" id="IPR020621">
    <property type="entry name" value="ATP-PRT_HisG_long"/>
</dbReference>
<dbReference type="InterPro" id="IPR013820">
    <property type="entry name" value="ATP_PRibTrfase_cat"/>
</dbReference>
<dbReference type="InterPro" id="IPR018198">
    <property type="entry name" value="ATP_PRibTrfase_CS"/>
</dbReference>
<dbReference type="InterPro" id="IPR001348">
    <property type="entry name" value="ATP_PRibTrfase_HisG"/>
</dbReference>
<dbReference type="InterPro" id="IPR013115">
    <property type="entry name" value="HisG_C"/>
</dbReference>
<dbReference type="InterPro" id="IPR011322">
    <property type="entry name" value="N-reg_PII-like_a/b"/>
</dbReference>
<dbReference type="InterPro" id="IPR015867">
    <property type="entry name" value="N-reg_PII/ATP_PRibTrfase_C"/>
</dbReference>
<dbReference type="NCBIfam" id="TIGR00070">
    <property type="entry name" value="hisG"/>
    <property type="match status" value="1"/>
</dbReference>
<dbReference type="NCBIfam" id="TIGR03455">
    <property type="entry name" value="HisG_C-term"/>
    <property type="match status" value="1"/>
</dbReference>
<dbReference type="PANTHER" id="PTHR21403:SF8">
    <property type="entry name" value="ATP PHOSPHORIBOSYLTRANSFERASE"/>
    <property type="match status" value="1"/>
</dbReference>
<dbReference type="PANTHER" id="PTHR21403">
    <property type="entry name" value="ATP PHOSPHORIBOSYLTRANSFERASE ATP-PRTASE"/>
    <property type="match status" value="1"/>
</dbReference>
<dbReference type="Pfam" id="PF01634">
    <property type="entry name" value="HisG"/>
    <property type="match status" value="1"/>
</dbReference>
<dbReference type="Pfam" id="PF08029">
    <property type="entry name" value="HisG_C"/>
    <property type="match status" value="1"/>
</dbReference>
<dbReference type="SUPFAM" id="SSF54913">
    <property type="entry name" value="GlnB-like"/>
    <property type="match status" value="1"/>
</dbReference>
<dbReference type="SUPFAM" id="SSF53850">
    <property type="entry name" value="Periplasmic binding protein-like II"/>
    <property type="match status" value="1"/>
</dbReference>
<dbReference type="PROSITE" id="PS01316">
    <property type="entry name" value="ATP_P_PHORIBOSYLTR"/>
    <property type="match status" value="1"/>
</dbReference>
<organism>
    <name type="scientific">Erwinia tasmaniensis (strain DSM 17950 / CFBP 7177 / CIP 109463 / NCPPB 4357 / Et1/99)</name>
    <dbReference type="NCBI Taxonomy" id="465817"/>
    <lineage>
        <taxon>Bacteria</taxon>
        <taxon>Pseudomonadati</taxon>
        <taxon>Pseudomonadota</taxon>
        <taxon>Gammaproteobacteria</taxon>
        <taxon>Enterobacterales</taxon>
        <taxon>Erwiniaceae</taxon>
        <taxon>Erwinia</taxon>
    </lineage>
</organism>
<sequence>MLDNTRLRIAMQKSGRLSDESRELLARCGIKINLQQQRLIAFAENMPIDILRVRDDDIPGLVMDGVVDLGIIGENVLEEELLTRRAQGEDPRYKTLRRLDFGGCRLSLAMSVDDEYSGPQCLQNSRIATSYPHLLKKYLDEQRVSFKSCLLNGSVEVAPRAGLADAICDLVSTGATLEANGLREVEVIYRSKACLIQRDGEMPANKQLLIDKLMTRIQGVIQARESKYIMLHAPSERLEEIITLLPGAERPTVLPLAGDKSRVAMHMVSSETLFWETMEKLKALGASSILVLPIEKMME</sequence>
<evidence type="ECO:0000255" key="1">
    <source>
        <dbReference type="HAMAP-Rule" id="MF_00079"/>
    </source>
</evidence>
<protein>
    <recommendedName>
        <fullName evidence="1">ATP phosphoribosyltransferase</fullName>
        <shortName evidence="1">ATP-PRT</shortName>
        <shortName evidence="1">ATP-PRTase</shortName>
        <ecNumber evidence="1">2.4.2.17</ecNumber>
    </recommendedName>
</protein>
<accession>B2VFL7</accession>
<proteinExistence type="inferred from homology"/>
<name>HIS1_ERWT9</name>
<reference key="1">
    <citation type="journal article" date="2008" name="Environ. Microbiol.">
        <title>The genome of Erwinia tasmaniensis strain Et1/99, a non-pathogenic bacterium in the genus Erwinia.</title>
        <authorList>
            <person name="Kube M."/>
            <person name="Migdoll A.M."/>
            <person name="Mueller I."/>
            <person name="Kuhl H."/>
            <person name="Beck A."/>
            <person name="Reinhardt R."/>
            <person name="Geider K."/>
        </authorList>
    </citation>
    <scope>NUCLEOTIDE SEQUENCE [LARGE SCALE GENOMIC DNA]</scope>
    <source>
        <strain>DSM 17950 / CFBP 7177 / CIP 109463 / NCPPB 4357 / Et1/99</strain>
    </source>
</reference>
<keyword id="KW-0028">Amino-acid biosynthesis</keyword>
<keyword id="KW-0067">ATP-binding</keyword>
<keyword id="KW-0963">Cytoplasm</keyword>
<keyword id="KW-0328">Glycosyltransferase</keyword>
<keyword id="KW-0368">Histidine biosynthesis</keyword>
<keyword id="KW-0460">Magnesium</keyword>
<keyword id="KW-0479">Metal-binding</keyword>
<keyword id="KW-0547">Nucleotide-binding</keyword>
<keyword id="KW-1185">Reference proteome</keyword>
<keyword id="KW-0808">Transferase</keyword>
<feature type="chain" id="PRO_1000092732" description="ATP phosphoribosyltransferase">
    <location>
        <begin position="1"/>
        <end position="299"/>
    </location>
</feature>